<protein>
    <recommendedName>
        <fullName evidence="1">Ribose import ATP-binding protein RbsA 1</fullName>
        <ecNumber evidence="1">7.5.2.7</ecNumber>
    </recommendedName>
</protein>
<keyword id="KW-0067">ATP-binding</keyword>
<keyword id="KW-1003">Cell membrane</keyword>
<keyword id="KW-0472">Membrane</keyword>
<keyword id="KW-0547">Nucleotide-binding</keyword>
<keyword id="KW-1185">Reference proteome</keyword>
<keyword id="KW-0677">Repeat</keyword>
<keyword id="KW-0762">Sugar transport</keyword>
<keyword id="KW-1278">Translocase</keyword>
<keyword id="KW-0813">Transport</keyword>
<dbReference type="EC" id="7.5.2.7" evidence="1"/>
<dbReference type="EMBL" id="CP000386">
    <property type="protein sequence ID" value="ABG03913.1"/>
    <property type="molecule type" value="Genomic_DNA"/>
</dbReference>
<dbReference type="RefSeq" id="WP_011563931.1">
    <property type="nucleotide sequence ID" value="NC_008148.1"/>
</dbReference>
<dbReference type="SMR" id="Q1AXG5"/>
<dbReference type="STRING" id="266117.Rxyl_0946"/>
<dbReference type="KEGG" id="rxy:Rxyl_0946"/>
<dbReference type="eggNOG" id="COG1129">
    <property type="taxonomic scope" value="Bacteria"/>
</dbReference>
<dbReference type="HOGENOM" id="CLU_000604_92_0_11"/>
<dbReference type="OrthoDB" id="8416490at2"/>
<dbReference type="PhylomeDB" id="Q1AXG5"/>
<dbReference type="Proteomes" id="UP000006637">
    <property type="component" value="Chromosome"/>
</dbReference>
<dbReference type="GO" id="GO:0005886">
    <property type="term" value="C:plasma membrane"/>
    <property type="evidence" value="ECO:0007669"/>
    <property type="project" value="UniProtKB-SubCell"/>
</dbReference>
<dbReference type="GO" id="GO:0015611">
    <property type="term" value="F:ABC-type D-ribose transporter activity"/>
    <property type="evidence" value="ECO:0007669"/>
    <property type="project" value="UniProtKB-EC"/>
</dbReference>
<dbReference type="GO" id="GO:0005524">
    <property type="term" value="F:ATP binding"/>
    <property type="evidence" value="ECO:0007669"/>
    <property type="project" value="UniProtKB-KW"/>
</dbReference>
<dbReference type="GO" id="GO:0016887">
    <property type="term" value="F:ATP hydrolysis activity"/>
    <property type="evidence" value="ECO:0007669"/>
    <property type="project" value="InterPro"/>
</dbReference>
<dbReference type="CDD" id="cd03216">
    <property type="entry name" value="ABC_Carb_Monos_I"/>
    <property type="match status" value="1"/>
</dbReference>
<dbReference type="CDD" id="cd03215">
    <property type="entry name" value="ABC_Carb_Monos_II"/>
    <property type="match status" value="1"/>
</dbReference>
<dbReference type="FunFam" id="3.40.50.300:FF:000127">
    <property type="entry name" value="Ribose import ATP-binding protein RbsA"/>
    <property type="match status" value="1"/>
</dbReference>
<dbReference type="Gene3D" id="3.40.50.300">
    <property type="entry name" value="P-loop containing nucleotide triphosphate hydrolases"/>
    <property type="match status" value="2"/>
</dbReference>
<dbReference type="InterPro" id="IPR003593">
    <property type="entry name" value="AAA+_ATPase"/>
</dbReference>
<dbReference type="InterPro" id="IPR050107">
    <property type="entry name" value="ABC_carbohydrate_import_ATPase"/>
</dbReference>
<dbReference type="InterPro" id="IPR003439">
    <property type="entry name" value="ABC_transporter-like_ATP-bd"/>
</dbReference>
<dbReference type="InterPro" id="IPR017871">
    <property type="entry name" value="ABC_transporter-like_CS"/>
</dbReference>
<dbReference type="InterPro" id="IPR027417">
    <property type="entry name" value="P-loop_NTPase"/>
</dbReference>
<dbReference type="PANTHER" id="PTHR43790">
    <property type="entry name" value="CARBOHYDRATE TRANSPORT ATP-BINDING PROTEIN MG119-RELATED"/>
    <property type="match status" value="1"/>
</dbReference>
<dbReference type="PANTHER" id="PTHR43790:SF9">
    <property type="entry name" value="GALACTOFURANOSE TRANSPORTER ATP-BINDING PROTEIN YTFR"/>
    <property type="match status" value="1"/>
</dbReference>
<dbReference type="Pfam" id="PF00005">
    <property type="entry name" value="ABC_tran"/>
    <property type="match status" value="2"/>
</dbReference>
<dbReference type="SMART" id="SM00382">
    <property type="entry name" value="AAA"/>
    <property type="match status" value="2"/>
</dbReference>
<dbReference type="SUPFAM" id="SSF52540">
    <property type="entry name" value="P-loop containing nucleoside triphosphate hydrolases"/>
    <property type="match status" value="2"/>
</dbReference>
<dbReference type="PROSITE" id="PS00211">
    <property type="entry name" value="ABC_TRANSPORTER_1"/>
    <property type="match status" value="1"/>
</dbReference>
<dbReference type="PROSITE" id="PS50893">
    <property type="entry name" value="ABC_TRANSPORTER_2"/>
    <property type="match status" value="2"/>
</dbReference>
<dbReference type="PROSITE" id="PS51254">
    <property type="entry name" value="RBSA"/>
    <property type="match status" value="1"/>
</dbReference>
<feature type="chain" id="PRO_0000261095" description="Ribose import ATP-binding protein RbsA 1">
    <location>
        <begin position="1"/>
        <end position="499"/>
    </location>
</feature>
<feature type="domain" description="ABC transporter 1" evidence="1">
    <location>
        <begin position="5"/>
        <end position="240"/>
    </location>
</feature>
<feature type="domain" description="ABC transporter 2" evidence="1">
    <location>
        <begin position="249"/>
        <end position="494"/>
    </location>
</feature>
<feature type="binding site" evidence="1">
    <location>
        <begin position="37"/>
        <end position="44"/>
    </location>
    <ligand>
        <name>ATP</name>
        <dbReference type="ChEBI" id="CHEBI:30616"/>
    </ligand>
</feature>
<gene>
    <name evidence="1" type="primary">rbsA1</name>
    <name type="ordered locus">Rxyl_0946</name>
</gene>
<accession>Q1AXG5</accession>
<evidence type="ECO:0000255" key="1">
    <source>
        <dbReference type="HAMAP-Rule" id="MF_01716"/>
    </source>
</evidence>
<sequence length="499" mass="54668">MRPLLEMRGITKRFPGVVALDGVDFELLPGEVHVLLGENGAGKSTLIKILSGAYRPDGGEILMDGRPVEIRSAAEARRLGISTIYQEFNLVPQLTVAENIHLGRQPRRFGVVDRGAMERAARELLERLGIRVDPRARVADLGVARRQMVEIAKALGLRARVLIMDEPTAALSEREVRQLFRIVRRLKEEGVGVVFISHHLEEVAEIGERVTVLRDGRLVGRVSADAGRDELVRMMVGRSIEEQFPRRRTEPGEVLLEVRGLGRRGVLRDVSLRVRAGEIVGVAGLVGAGRTELARAIFGLDPADSGEVLVEGRPLEAPGPQEARRRGVGFVTEDRQGQGIVPPLSVAENLALASLERYLRGRVLVDRGRLLRRAREIVQSLRIRTPSLEQEIRYLSGGNQQKAVIGRWMLAGSRVLIMDEPTRGVDVGAKVEIYELMNRLTEEGAGILMISSEMPEVLGMSDRVLVMSGGRITGELPAEEATQERVMGLATAGSEAAVG</sequence>
<reference key="1">
    <citation type="submission" date="2006-06" db="EMBL/GenBank/DDBJ databases">
        <title>Complete sequence of Rubrobacter xylanophilus DSM 9941.</title>
        <authorList>
            <consortium name="US DOE Joint Genome Institute"/>
            <person name="Copeland A."/>
            <person name="Lucas S."/>
            <person name="Lapidus A."/>
            <person name="Barry K."/>
            <person name="Detter J.C."/>
            <person name="Glavina del Rio T."/>
            <person name="Hammon N."/>
            <person name="Israni S."/>
            <person name="Dalin E."/>
            <person name="Tice H."/>
            <person name="Pitluck S."/>
            <person name="Munk A.C."/>
            <person name="Brettin T."/>
            <person name="Bruce D."/>
            <person name="Han C."/>
            <person name="Tapia R."/>
            <person name="Gilna P."/>
            <person name="Schmutz J."/>
            <person name="Larimer F."/>
            <person name="Land M."/>
            <person name="Hauser L."/>
            <person name="Kyrpides N."/>
            <person name="Lykidis A."/>
            <person name="da Costa M.S."/>
            <person name="Rainey F.A."/>
            <person name="Empadinhas N."/>
            <person name="Jolivet E."/>
            <person name="Battista J.R."/>
            <person name="Richardson P."/>
        </authorList>
    </citation>
    <scope>NUCLEOTIDE SEQUENCE [LARGE SCALE GENOMIC DNA]</scope>
    <source>
        <strain>DSM 9941 / JCM 11954 / NBRC 16129 / PRD-1</strain>
    </source>
</reference>
<organism>
    <name type="scientific">Rubrobacter xylanophilus (strain DSM 9941 / JCM 11954 / NBRC 16129 / PRD-1)</name>
    <dbReference type="NCBI Taxonomy" id="266117"/>
    <lineage>
        <taxon>Bacteria</taxon>
        <taxon>Bacillati</taxon>
        <taxon>Actinomycetota</taxon>
        <taxon>Rubrobacteria</taxon>
        <taxon>Rubrobacterales</taxon>
        <taxon>Rubrobacteraceae</taxon>
        <taxon>Rubrobacter</taxon>
    </lineage>
</organism>
<name>RBSA1_RUBXD</name>
<comment type="function">
    <text evidence="1">Part of the ABC transporter complex RbsABC involved in ribose import. Responsible for energy coupling to the transport system.</text>
</comment>
<comment type="catalytic activity">
    <reaction evidence="1">
        <text>D-ribose(out) + ATP + H2O = D-ribose(in) + ADP + phosphate + H(+)</text>
        <dbReference type="Rhea" id="RHEA:29903"/>
        <dbReference type="ChEBI" id="CHEBI:15377"/>
        <dbReference type="ChEBI" id="CHEBI:15378"/>
        <dbReference type="ChEBI" id="CHEBI:30616"/>
        <dbReference type="ChEBI" id="CHEBI:43474"/>
        <dbReference type="ChEBI" id="CHEBI:47013"/>
        <dbReference type="ChEBI" id="CHEBI:456216"/>
        <dbReference type="EC" id="7.5.2.7"/>
    </reaction>
</comment>
<comment type="subunit">
    <text evidence="1">The complex is composed of an ATP-binding protein (RbsA), two transmembrane proteins (RbsC) and a solute-binding protein (RbsB).</text>
</comment>
<comment type="subcellular location">
    <subcellularLocation>
        <location evidence="1">Cell membrane</location>
        <topology evidence="1">Peripheral membrane protein</topology>
    </subcellularLocation>
</comment>
<comment type="similarity">
    <text evidence="1">Belongs to the ABC transporter superfamily. Ribose importer (TC 3.A.1.2.1) family.</text>
</comment>
<proteinExistence type="inferred from homology"/>